<organism>
    <name type="scientific">Rippkaea orientalis (strain PCC 8801 / RF-1)</name>
    <name type="common">Cyanothece sp. (strain PCC 8801)</name>
    <dbReference type="NCBI Taxonomy" id="41431"/>
    <lineage>
        <taxon>Bacteria</taxon>
        <taxon>Bacillati</taxon>
        <taxon>Cyanobacteriota</taxon>
        <taxon>Cyanophyceae</taxon>
        <taxon>Oscillatoriophycideae</taxon>
        <taxon>Chroococcales</taxon>
        <taxon>Aphanothecaceae</taxon>
        <taxon>Rippkaea</taxon>
        <taxon>Rippkaea orientalis</taxon>
    </lineage>
</organism>
<evidence type="ECO:0000255" key="1">
    <source>
        <dbReference type="HAMAP-Rule" id="MF_00251"/>
    </source>
</evidence>
<evidence type="ECO:0000305" key="2"/>
<accession>B7K227</accession>
<keyword id="KW-1185">Reference proteome</keyword>
<keyword id="KW-0687">Ribonucleoprotein</keyword>
<keyword id="KW-0689">Ribosomal protein</keyword>
<reference key="1">
    <citation type="journal article" date="2011" name="MBio">
        <title>Novel metabolic attributes of the genus Cyanothece, comprising a group of unicellular nitrogen-fixing Cyanobacteria.</title>
        <authorList>
            <person name="Bandyopadhyay A."/>
            <person name="Elvitigala T."/>
            <person name="Welsh E."/>
            <person name="Stockel J."/>
            <person name="Liberton M."/>
            <person name="Min H."/>
            <person name="Sherman L.A."/>
            <person name="Pakrasi H.B."/>
        </authorList>
    </citation>
    <scope>NUCLEOTIDE SEQUENCE [LARGE SCALE GENOMIC DNA]</scope>
    <source>
        <strain>PCC 8801 / RF-1</strain>
    </source>
</reference>
<protein>
    <recommendedName>
        <fullName evidence="1">Large ribosomal subunit protein bL36</fullName>
    </recommendedName>
    <alternativeName>
        <fullName evidence="2">50S ribosomal protein L36</fullName>
    </alternativeName>
</protein>
<proteinExistence type="inferred from homology"/>
<dbReference type="EMBL" id="CP001287">
    <property type="protein sequence ID" value="ACK64334.1"/>
    <property type="molecule type" value="Genomic_DNA"/>
</dbReference>
<dbReference type="RefSeq" id="WP_012593611.1">
    <property type="nucleotide sequence ID" value="NC_011726.1"/>
</dbReference>
<dbReference type="SMR" id="B7K227"/>
<dbReference type="STRING" id="41431.PCC8801_0231"/>
<dbReference type="GeneID" id="66709337"/>
<dbReference type="KEGG" id="cyp:PCC8801_0231"/>
<dbReference type="eggNOG" id="COG0257">
    <property type="taxonomic scope" value="Bacteria"/>
</dbReference>
<dbReference type="HOGENOM" id="CLU_135723_6_2_3"/>
<dbReference type="Proteomes" id="UP000008204">
    <property type="component" value="Chromosome"/>
</dbReference>
<dbReference type="GO" id="GO:0005737">
    <property type="term" value="C:cytoplasm"/>
    <property type="evidence" value="ECO:0007669"/>
    <property type="project" value="UniProtKB-ARBA"/>
</dbReference>
<dbReference type="GO" id="GO:1990904">
    <property type="term" value="C:ribonucleoprotein complex"/>
    <property type="evidence" value="ECO:0007669"/>
    <property type="project" value="UniProtKB-KW"/>
</dbReference>
<dbReference type="GO" id="GO:0005840">
    <property type="term" value="C:ribosome"/>
    <property type="evidence" value="ECO:0007669"/>
    <property type="project" value="UniProtKB-KW"/>
</dbReference>
<dbReference type="GO" id="GO:0003735">
    <property type="term" value="F:structural constituent of ribosome"/>
    <property type="evidence" value="ECO:0007669"/>
    <property type="project" value="InterPro"/>
</dbReference>
<dbReference type="GO" id="GO:0006412">
    <property type="term" value="P:translation"/>
    <property type="evidence" value="ECO:0007669"/>
    <property type="project" value="UniProtKB-UniRule"/>
</dbReference>
<dbReference type="HAMAP" id="MF_00251">
    <property type="entry name" value="Ribosomal_bL36"/>
    <property type="match status" value="1"/>
</dbReference>
<dbReference type="InterPro" id="IPR000473">
    <property type="entry name" value="Ribosomal_bL36"/>
</dbReference>
<dbReference type="InterPro" id="IPR035977">
    <property type="entry name" value="Ribosomal_bL36_sp"/>
</dbReference>
<dbReference type="NCBIfam" id="TIGR01022">
    <property type="entry name" value="rpmJ_bact"/>
    <property type="match status" value="1"/>
</dbReference>
<dbReference type="PANTHER" id="PTHR42888">
    <property type="entry name" value="50S RIBOSOMAL PROTEIN L36, CHLOROPLASTIC"/>
    <property type="match status" value="1"/>
</dbReference>
<dbReference type="PANTHER" id="PTHR42888:SF1">
    <property type="entry name" value="LARGE RIBOSOMAL SUBUNIT PROTEIN BL36C"/>
    <property type="match status" value="1"/>
</dbReference>
<dbReference type="Pfam" id="PF00444">
    <property type="entry name" value="Ribosomal_L36"/>
    <property type="match status" value="1"/>
</dbReference>
<dbReference type="SUPFAM" id="SSF57840">
    <property type="entry name" value="Ribosomal protein L36"/>
    <property type="match status" value="1"/>
</dbReference>
<dbReference type="PROSITE" id="PS00828">
    <property type="entry name" value="RIBOSOMAL_L36"/>
    <property type="match status" value="1"/>
</dbReference>
<sequence length="37" mass="4398">MKVRASVKKMCEKCRVIRRRGRVMVICSNPKHKQRQG</sequence>
<gene>
    <name evidence="1" type="primary">rpmJ</name>
    <name type="ordered locus">PCC8801_0231</name>
</gene>
<feature type="chain" id="PRO_1000196184" description="Large ribosomal subunit protein bL36">
    <location>
        <begin position="1"/>
        <end position="37"/>
    </location>
</feature>
<comment type="similarity">
    <text evidence="1">Belongs to the bacterial ribosomal protein bL36 family.</text>
</comment>
<name>RL36_RIPO1</name>